<reference key="1">
    <citation type="journal article" date="1997" name="Nature">
        <title>The complete genome sequence of the Gram-positive bacterium Bacillus subtilis.</title>
        <authorList>
            <person name="Kunst F."/>
            <person name="Ogasawara N."/>
            <person name="Moszer I."/>
            <person name="Albertini A.M."/>
            <person name="Alloni G."/>
            <person name="Azevedo V."/>
            <person name="Bertero M.G."/>
            <person name="Bessieres P."/>
            <person name="Bolotin A."/>
            <person name="Borchert S."/>
            <person name="Borriss R."/>
            <person name="Boursier L."/>
            <person name="Brans A."/>
            <person name="Braun M."/>
            <person name="Brignell S.C."/>
            <person name="Bron S."/>
            <person name="Brouillet S."/>
            <person name="Bruschi C.V."/>
            <person name="Caldwell B."/>
            <person name="Capuano V."/>
            <person name="Carter N.M."/>
            <person name="Choi S.-K."/>
            <person name="Codani J.-J."/>
            <person name="Connerton I.F."/>
            <person name="Cummings N.J."/>
            <person name="Daniel R.A."/>
            <person name="Denizot F."/>
            <person name="Devine K.M."/>
            <person name="Duesterhoeft A."/>
            <person name="Ehrlich S.D."/>
            <person name="Emmerson P.T."/>
            <person name="Entian K.-D."/>
            <person name="Errington J."/>
            <person name="Fabret C."/>
            <person name="Ferrari E."/>
            <person name="Foulger D."/>
            <person name="Fritz C."/>
            <person name="Fujita M."/>
            <person name="Fujita Y."/>
            <person name="Fuma S."/>
            <person name="Galizzi A."/>
            <person name="Galleron N."/>
            <person name="Ghim S.-Y."/>
            <person name="Glaser P."/>
            <person name="Goffeau A."/>
            <person name="Golightly E.J."/>
            <person name="Grandi G."/>
            <person name="Guiseppi G."/>
            <person name="Guy B.J."/>
            <person name="Haga K."/>
            <person name="Haiech J."/>
            <person name="Harwood C.R."/>
            <person name="Henaut A."/>
            <person name="Hilbert H."/>
            <person name="Holsappel S."/>
            <person name="Hosono S."/>
            <person name="Hullo M.-F."/>
            <person name="Itaya M."/>
            <person name="Jones L.-M."/>
            <person name="Joris B."/>
            <person name="Karamata D."/>
            <person name="Kasahara Y."/>
            <person name="Klaerr-Blanchard M."/>
            <person name="Klein C."/>
            <person name="Kobayashi Y."/>
            <person name="Koetter P."/>
            <person name="Koningstein G."/>
            <person name="Krogh S."/>
            <person name="Kumano M."/>
            <person name="Kurita K."/>
            <person name="Lapidus A."/>
            <person name="Lardinois S."/>
            <person name="Lauber J."/>
            <person name="Lazarevic V."/>
            <person name="Lee S.-M."/>
            <person name="Levine A."/>
            <person name="Liu H."/>
            <person name="Masuda S."/>
            <person name="Mauel C."/>
            <person name="Medigue C."/>
            <person name="Medina N."/>
            <person name="Mellado R.P."/>
            <person name="Mizuno M."/>
            <person name="Moestl D."/>
            <person name="Nakai S."/>
            <person name="Noback M."/>
            <person name="Noone D."/>
            <person name="O'Reilly M."/>
            <person name="Ogawa K."/>
            <person name="Ogiwara A."/>
            <person name="Oudega B."/>
            <person name="Park S.-H."/>
            <person name="Parro V."/>
            <person name="Pohl T.M."/>
            <person name="Portetelle D."/>
            <person name="Porwollik S."/>
            <person name="Prescott A.M."/>
            <person name="Presecan E."/>
            <person name="Pujic P."/>
            <person name="Purnelle B."/>
            <person name="Rapoport G."/>
            <person name="Rey M."/>
            <person name="Reynolds S."/>
            <person name="Rieger M."/>
            <person name="Rivolta C."/>
            <person name="Rocha E."/>
            <person name="Roche B."/>
            <person name="Rose M."/>
            <person name="Sadaie Y."/>
            <person name="Sato T."/>
            <person name="Scanlan E."/>
            <person name="Schleich S."/>
            <person name="Schroeter R."/>
            <person name="Scoffone F."/>
            <person name="Sekiguchi J."/>
            <person name="Sekowska A."/>
            <person name="Seror S.J."/>
            <person name="Serror P."/>
            <person name="Shin B.-S."/>
            <person name="Soldo B."/>
            <person name="Sorokin A."/>
            <person name="Tacconi E."/>
            <person name="Takagi T."/>
            <person name="Takahashi H."/>
            <person name="Takemaru K."/>
            <person name="Takeuchi M."/>
            <person name="Tamakoshi A."/>
            <person name="Tanaka T."/>
            <person name="Terpstra P."/>
            <person name="Tognoni A."/>
            <person name="Tosato V."/>
            <person name="Uchiyama S."/>
            <person name="Vandenbol M."/>
            <person name="Vannier F."/>
            <person name="Vassarotti A."/>
            <person name="Viari A."/>
            <person name="Wambutt R."/>
            <person name="Wedler E."/>
            <person name="Wedler H."/>
            <person name="Weitzenegger T."/>
            <person name="Winters P."/>
            <person name="Wipat A."/>
            <person name="Yamamoto H."/>
            <person name="Yamane K."/>
            <person name="Yasumoto K."/>
            <person name="Yata K."/>
            <person name="Yoshida K."/>
            <person name="Yoshikawa H.-F."/>
            <person name="Zumstein E."/>
            <person name="Yoshikawa H."/>
            <person name="Danchin A."/>
        </authorList>
    </citation>
    <scope>NUCLEOTIDE SEQUENCE [LARGE SCALE GENOMIC DNA]</scope>
    <source>
        <strain>168</strain>
    </source>
</reference>
<comment type="similarity">
    <text evidence="1">To B.subtilis YpjQ.</text>
</comment>
<name>YUTG_BACSU</name>
<protein>
    <recommendedName>
        <fullName>Uncharacterized protein YutG</fullName>
    </recommendedName>
</protein>
<gene>
    <name type="primary">yutG</name>
    <name type="ordered locus">BSU32280</name>
</gene>
<accession>O32124</accession>
<organism>
    <name type="scientific">Bacillus subtilis (strain 168)</name>
    <dbReference type="NCBI Taxonomy" id="224308"/>
    <lineage>
        <taxon>Bacteria</taxon>
        <taxon>Bacillati</taxon>
        <taxon>Bacillota</taxon>
        <taxon>Bacilli</taxon>
        <taxon>Bacillales</taxon>
        <taxon>Bacillaceae</taxon>
        <taxon>Bacillus</taxon>
    </lineage>
</organism>
<proteinExistence type="predicted"/>
<dbReference type="EMBL" id="AL009126">
    <property type="protein sequence ID" value="CAB15218.1"/>
    <property type="molecule type" value="Genomic_DNA"/>
</dbReference>
<dbReference type="PIR" id="A70024">
    <property type="entry name" value="A70024"/>
</dbReference>
<dbReference type="RefSeq" id="NP_391108.1">
    <property type="nucleotide sequence ID" value="NC_000964.3"/>
</dbReference>
<dbReference type="RefSeq" id="WP_003243814.1">
    <property type="nucleotide sequence ID" value="NZ_OZ025638.1"/>
</dbReference>
<dbReference type="SMR" id="O32124"/>
<dbReference type="FunCoup" id="O32124">
    <property type="interactions" value="54"/>
</dbReference>
<dbReference type="STRING" id="224308.BSU32280"/>
<dbReference type="PaxDb" id="224308-BSU32280"/>
<dbReference type="DNASU" id="936659"/>
<dbReference type="EnsemblBacteria" id="CAB15218">
    <property type="protein sequence ID" value="CAB15218"/>
    <property type="gene ID" value="BSU_32280"/>
</dbReference>
<dbReference type="GeneID" id="936659"/>
<dbReference type="KEGG" id="bsu:BSU32280"/>
<dbReference type="PATRIC" id="fig|224308.179.peg.3495"/>
<dbReference type="eggNOG" id="COG1267">
    <property type="taxonomic scope" value="Bacteria"/>
</dbReference>
<dbReference type="InParanoid" id="O32124"/>
<dbReference type="OrthoDB" id="9793244at2"/>
<dbReference type="PhylomeDB" id="O32124"/>
<dbReference type="BioCyc" id="BSUB:BSU32280-MONOMER"/>
<dbReference type="Proteomes" id="UP000001570">
    <property type="component" value="Chromosome"/>
</dbReference>
<dbReference type="GO" id="GO:0008962">
    <property type="term" value="F:phosphatidylglycerophosphatase activity"/>
    <property type="evidence" value="ECO:0007669"/>
    <property type="project" value="InterPro"/>
</dbReference>
<dbReference type="GO" id="GO:0006629">
    <property type="term" value="P:lipid metabolic process"/>
    <property type="evidence" value="ECO:0007669"/>
    <property type="project" value="InterPro"/>
</dbReference>
<dbReference type="CDD" id="cd06971">
    <property type="entry name" value="PgpA"/>
    <property type="match status" value="1"/>
</dbReference>
<dbReference type="Gene3D" id="1.10.3760.10">
    <property type="entry name" value="PgpA-like"/>
    <property type="match status" value="1"/>
</dbReference>
<dbReference type="InterPro" id="IPR036681">
    <property type="entry name" value="PgpA-like_sf"/>
</dbReference>
<dbReference type="InterPro" id="IPR026038">
    <property type="entry name" value="Put_PGPase"/>
</dbReference>
<dbReference type="InterPro" id="IPR007686">
    <property type="entry name" value="YutG/PgpA"/>
</dbReference>
<dbReference type="Pfam" id="PF04608">
    <property type="entry name" value="PgpA"/>
    <property type="match status" value="1"/>
</dbReference>
<dbReference type="PIRSF" id="PIRSF019587">
    <property type="entry name" value="PGPase"/>
    <property type="match status" value="1"/>
</dbReference>
<dbReference type="SUPFAM" id="SSF101307">
    <property type="entry name" value="YutG-like"/>
    <property type="match status" value="1"/>
</dbReference>
<evidence type="ECO:0000305" key="1"/>
<feature type="chain" id="PRO_0000049926" description="Uncharacterized protein YutG">
    <location>
        <begin position="1"/>
        <end position="166"/>
    </location>
</feature>
<sequence>MSENEQFSQMEAKARARMKERGVEVSDIAELVFFLQKKYHPDLTIDECTLNVNRVLAKREVQNAILTGIELDVLAEQKKLSEPLQTMLEIDESLYGVDEVLAFSIVNIYGSIGFTNYGYIDKEKPGILKRLNDKSTGECHTFLDDIVGAISAAASSRLAHRARHTE</sequence>
<keyword id="KW-1185">Reference proteome</keyword>